<proteinExistence type="inferred from homology"/>
<evidence type="ECO:0000255" key="1">
    <source>
        <dbReference type="HAMAP-Rule" id="MF_00789"/>
    </source>
</evidence>
<gene>
    <name type="ordered locus">Sbal223_2728</name>
</gene>
<dbReference type="EMBL" id="CP001252">
    <property type="protein sequence ID" value="ACK47216.1"/>
    <property type="molecule type" value="Genomic_DNA"/>
</dbReference>
<dbReference type="RefSeq" id="WP_006085379.1">
    <property type="nucleotide sequence ID" value="NC_011663.1"/>
</dbReference>
<dbReference type="KEGG" id="sbp:Sbal223_2728"/>
<dbReference type="HOGENOM" id="CLU_1155758_0_0_6"/>
<dbReference type="Proteomes" id="UP000002507">
    <property type="component" value="Chromosome"/>
</dbReference>
<dbReference type="HAMAP" id="MF_00789">
    <property type="entry name" value="UPF0319"/>
    <property type="match status" value="1"/>
</dbReference>
<dbReference type="InterPro" id="IPR018635">
    <property type="entry name" value="UPF0319"/>
</dbReference>
<dbReference type="PANTHER" id="PTHR38108">
    <property type="entry name" value="UPF0319 PROTEIN YCCT"/>
    <property type="match status" value="1"/>
</dbReference>
<dbReference type="PANTHER" id="PTHR38108:SF1">
    <property type="entry name" value="UPF0319 PROTEIN YCCT"/>
    <property type="match status" value="1"/>
</dbReference>
<dbReference type="Pfam" id="PF09829">
    <property type="entry name" value="DUF2057"/>
    <property type="match status" value="1"/>
</dbReference>
<keyword id="KW-0732">Signal</keyword>
<name>Y2728_SHEB2</name>
<feature type="signal peptide" evidence="1">
    <location>
        <begin position="1"/>
        <end position="21"/>
    </location>
</feature>
<feature type="chain" id="PRO_5000424420" description="UPF0319 protein Sbal223_2728">
    <location>
        <begin position="22"/>
        <end position="229"/>
    </location>
</feature>
<organism>
    <name type="scientific">Shewanella baltica (strain OS223)</name>
    <dbReference type="NCBI Taxonomy" id="407976"/>
    <lineage>
        <taxon>Bacteria</taxon>
        <taxon>Pseudomonadati</taxon>
        <taxon>Pseudomonadota</taxon>
        <taxon>Gammaproteobacteria</taxon>
        <taxon>Alteromonadales</taxon>
        <taxon>Shewanellaceae</taxon>
        <taxon>Shewanella</taxon>
    </lineage>
</organism>
<accession>B8EF98</accession>
<reference key="1">
    <citation type="submission" date="2008-12" db="EMBL/GenBank/DDBJ databases">
        <title>Complete sequence of chromosome of Shewanella baltica OS223.</title>
        <authorList>
            <consortium name="US DOE Joint Genome Institute"/>
            <person name="Lucas S."/>
            <person name="Copeland A."/>
            <person name="Lapidus A."/>
            <person name="Glavina del Rio T."/>
            <person name="Dalin E."/>
            <person name="Tice H."/>
            <person name="Bruce D."/>
            <person name="Goodwin L."/>
            <person name="Pitluck S."/>
            <person name="Chertkov O."/>
            <person name="Meincke L."/>
            <person name="Brettin T."/>
            <person name="Detter J.C."/>
            <person name="Han C."/>
            <person name="Kuske C.R."/>
            <person name="Larimer F."/>
            <person name="Land M."/>
            <person name="Hauser L."/>
            <person name="Kyrpides N."/>
            <person name="Ovchinnikova G."/>
            <person name="Brettar I."/>
            <person name="Rodrigues J."/>
            <person name="Konstantinidis K."/>
            <person name="Tiedje J."/>
        </authorList>
    </citation>
    <scope>NUCLEOTIDE SEQUENCE [LARGE SCALE GENOMIC DNA]</scope>
    <source>
        <strain>OS223</strain>
    </source>
</reference>
<sequence length="229" mass="24659">MKSLLPISSLLVLLGSASAFAADLNIPMSFEYLALDGKKVESSVFNHKSSLELTPGTHKIAIRYHEMVEDDFSDSQTFVKSAPFIVTLDVDGDYQYYLQAAEGKVVKKPKVYAQNPQIKLTRGDKGDVNFQVVNTNLEEESFVSRLFSGNQAVDVSGTAAAATGAAGAVVAVAPAPVATSATVSATSLTAPVDTSKATAANPQQMLQYWWLQADEKTRKEFMSWAISQL</sequence>
<protein>
    <recommendedName>
        <fullName evidence="1">UPF0319 protein Sbal223_2728</fullName>
    </recommendedName>
</protein>
<comment type="similarity">
    <text evidence="1">Belongs to the UPF0319 family.</text>
</comment>